<gene>
    <name evidence="1" type="primary">pncB</name>
    <name type="ordered locus">Bcen2424_1100</name>
</gene>
<reference key="1">
    <citation type="submission" date="2006-08" db="EMBL/GenBank/DDBJ databases">
        <title>Complete sequence of chromosome 1 of Burkholderia cenocepacia HI2424.</title>
        <authorList>
            <person name="Copeland A."/>
            <person name="Lucas S."/>
            <person name="Lapidus A."/>
            <person name="Barry K."/>
            <person name="Detter J.C."/>
            <person name="Glavina del Rio T."/>
            <person name="Hammon N."/>
            <person name="Israni S."/>
            <person name="Pitluck S."/>
            <person name="Chain P."/>
            <person name="Malfatti S."/>
            <person name="Shin M."/>
            <person name="Vergez L."/>
            <person name="Schmutz J."/>
            <person name="Larimer F."/>
            <person name="Land M."/>
            <person name="Hauser L."/>
            <person name="Kyrpides N."/>
            <person name="Kim E."/>
            <person name="LiPuma J.J."/>
            <person name="Gonzalez C.F."/>
            <person name="Konstantinidis K."/>
            <person name="Tiedje J.M."/>
            <person name="Richardson P."/>
        </authorList>
    </citation>
    <scope>NUCLEOTIDE SEQUENCE [LARGE SCALE GENOMIC DNA]</scope>
    <source>
        <strain>HI2424</strain>
    </source>
</reference>
<dbReference type="EC" id="6.3.4.21" evidence="1"/>
<dbReference type="EMBL" id="CP000458">
    <property type="protein sequence ID" value="ABK07853.1"/>
    <property type="molecule type" value="Genomic_DNA"/>
</dbReference>
<dbReference type="RefSeq" id="WP_011544920.1">
    <property type="nucleotide sequence ID" value="NC_008542.1"/>
</dbReference>
<dbReference type="SMR" id="A0K5S6"/>
<dbReference type="KEGG" id="bch:Bcen2424_1100"/>
<dbReference type="HOGENOM" id="CLU_030991_1_0_4"/>
<dbReference type="UniPathway" id="UPA00253">
    <property type="reaction ID" value="UER00457"/>
</dbReference>
<dbReference type="GO" id="GO:0005829">
    <property type="term" value="C:cytosol"/>
    <property type="evidence" value="ECO:0007669"/>
    <property type="project" value="TreeGrafter"/>
</dbReference>
<dbReference type="GO" id="GO:0004516">
    <property type="term" value="F:nicotinate phosphoribosyltransferase activity"/>
    <property type="evidence" value="ECO:0007669"/>
    <property type="project" value="UniProtKB-UniRule"/>
</dbReference>
<dbReference type="GO" id="GO:0034355">
    <property type="term" value="P:NAD biosynthetic process via the salvage pathway"/>
    <property type="evidence" value="ECO:0007669"/>
    <property type="project" value="TreeGrafter"/>
</dbReference>
<dbReference type="CDD" id="cd01401">
    <property type="entry name" value="PncB_like"/>
    <property type="match status" value="1"/>
</dbReference>
<dbReference type="Gene3D" id="3.20.140.10">
    <property type="entry name" value="nicotinate phosphoribosyltransferase"/>
    <property type="match status" value="1"/>
</dbReference>
<dbReference type="HAMAP" id="MF_00570">
    <property type="entry name" value="NAPRTase"/>
    <property type="match status" value="1"/>
</dbReference>
<dbReference type="InterPro" id="IPR041525">
    <property type="entry name" value="N/Namide_PRibTrfase"/>
</dbReference>
<dbReference type="InterPro" id="IPR040727">
    <property type="entry name" value="NAPRTase_N"/>
</dbReference>
<dbReference type="InterPro" id="IPR006406">
    <property type="entry name" value="Nic_PRibTrfase"/>
</dbReference>
<dbReference type="InterPro" id="IPR007229">
    <property type="entry name" value="Nic_PRibTrfase-Fam"/>
</dbReference>
<dbReference type="InterPro" id="IPR036068">
    <property type="entry name" value="Nicotinate_pribotase-like_C"/>
</dbReference>
<dbReference type="NCBIfam" id="TIGR01514">
    <property type="entry name" value="NAPRTase"/>
    <property type="match status" value="1"/>
</dbReference>
<dbReference type="NCBIfam" id="NF003704">
    <property type="entry name" value="PRK05321.1"/>
    <property type="match status" value="1"/>
</dbReference>
<dbReference type="PANTHER" id="PTHR11098">
    <property type="entry name" value="NICOTINATE PHOSPHORIBOSYLTRANSFERASE"/>
    <property type="match status" value="1"/>
</dbReference>
<dbReference type="PANTHER" id="PTHR11098:SF1">
    <property type="entry name" value="NICOTINATE PHOSPHORIBOSYLTRANSFERASE"/>
    <property type="match status" value="1"/>
</dbReference>
<dbReference type="Pfam" id="PF04095">
    <property type="entry name" value="NAPRTase"/>
    <property type="match status" value="1"/>
</dbReference>
<dbReference type="Pfam" id="PF17767">
    <property type="entry name" value="NAPRTase_N"/>
    <property type="match status" value="1"/>
</dbReference>
<dbReference type="PIRSF" id="PIRSF000484">
    <property type="entry name" value="NAPRT"/>
    <property type="match status" value="1"/>
</dbReference>
<dbReference type="SUPFAM" id="SSF51690">
    <property type="entry name" value="Nicotinate/Quinolinate PRTase C-terminal domain-like"/>
    <property type="match status" value="1"/>
</dbReference>
<dbReference type="SUPFAM" id="SSF54675">
    <property type="entry name" value="Nicotinate/Quinolinate PRTase N-terminal domain-like"/>
    <property type="match status" value="1"/>
</dbReference>
<sequence>MIITSLLDTDLYKFTMMQVVLHHFPAANVEYRFRCRTPGVDLVPYIDEIRDEVRGLCSLRFADVELDYLRRMRFIKSDFVDFLALFHLNEKYISITPSPKGNGEIDIVIEGPWLHTILFEIPVLAIVNEVYFRNTQREPDYREGRERLREKIKLLGAKPEFADCKIADYGTRRRFSKVWHEEVALTLRDGLGPQFAGTSNVLYAMKHDITPLGTMAHEYLQACQALGPRLRDSQIYGFEMWAKEYRGDLGIALSDVYGMDAFLNDFDMYFCKLFDGARHDSGDPFEWGERMLRHYEANRCDPRTKVLVFSDALDIPKVMQLYERFRGRCKLAFGVGTNLTNDLGYVPLQIVIKMVRCNGQPVAKLSDSPGKSMCDDKAYLAYLRQVFGIAQPVDEDASK</sequence>
<keyword id="KW-0436">Ligase</keyword>
<keyword id="KW-0597">Phosphoprotein</keyword>
<keyword id="KW-0662">Pyridine nucleotide biosynthesis</keyword>
<evidence type="ECO:0000255" key="1">
    <source>
        <dbReference type="HAMAP-Rule" id="MF_00570"/>
    </source>
</evidence>
<comment type="function">
    <text evidence="1">Catalyzes the synthesis of beta-nicotinate D-ribonucleotide from nicotinate and 5-phospho-D-ribose 1-phosphate at the expense of ATP.</text>
</comment>
<comment type="catalytic activity">
    <reaction evidence="1">
        <text>nicotinate + 5-phospho-alpha-D-ribose 1-diphosphate + ATP + H2O = nicotinate beta-D-ribonucleotide + ADP + phosphate + diphosphate</text>
        <dbReference type="Rhea" id="RHEA:36163"/>
        <dbReference type="ChEBI" id="CHEBI:15377"/>
        <dbReference type="ChEBI" id="CHEBI:30616"/>
        <dbReference type="ChEBI" id="CHEBI:32544"/>
        <dbReference type="ChEBI" id="CHEBI:33019"/>
        <dbReference type="ChEBI" id="CHEBI:43474"/>
        <dbReference type="ChEBI" id="CHEBI:57502"/>
        <dbReference type="ChEBI" id="CHEBI:58017"/>
        <dbReference type="ChEBI" id="CHEBI:456216"/>
        <dbReference type="EC" id="6.3.4.21"/>
    </reaction>
</comment>
<comment type="pathway">
    <text evidence="1">Cofactor biosynthesis; NAD(+) biosynthesis; nicotinate D-ribonucleotide from nicotinate: step 1/1.</text>
</comment>
<comment type="PTM">
    <text evidence="1">Transiently phosphorylated on a His residue during the reaction cycle. Phosphorylation strongly increases the affinity for substrates and increases the rate of nicotinate D-ribonucleotide production. Dephosphorylation regenerates the low-affinity form of the enzyme, leading to product release.</text>
</comment>
<comment type="similarity">
    <text evidence="1">Belongs to the NAPRTase family.</text>
</comment>
<proteinExistence type="inferred from homology"/>
<organism>
    <name type="scientific">Burkholderia cenocepacia (strain HI2424)</name>
    <dbReference type="NCBI Taxonomy" id="331272"/>
    <lineage>
        <taxon>Bacteria</taxon>
        <taxon>Pseudomonadati</taxon>
        <taxon>Pseudomonadota</taxon>
        <taxon>Betaproteobacteria</taxon>
        <taxon>Burkholderiales</taxon>
        <taxon>Burkholderiaceae</taxon>
        <taxon>Burkholderia</taxon>
        <taxon>Burkholderia cepacia complex</taxon>
    </lineage>
</organism>
<protein>
    <recommendedName>
        <fullName evidence="1">Nicotinate phosphoribosyltransferase</fullName>
        <shortName evidence="1">NAPRTase</shortName>
        <ecNumber evidence="1">6.3.4.21</ecNumber>
    </recommendedName>
</protein>
<name>PNCB_BURCH</name>
<feature type="chain" id="PRO_1000024998" description="Nicotinate phosphoribosyltransferase">
    <location>
        <begin position="1"/>
        <end position="399"/>
    </location>
</feature>
<feature type="modified residue" description="Phosphohistidine; by autocatalysis" evidence="1">
    <location>
        <position position="217"/>
    </location>
</feature>
<accession>A0K5S6</accession>